<evidence type="ECO:0000250" key="1">
    <source>
        <dbReference type="UniProtKB" id="P00403"/>
    </source>
</evidence>
<evidence type="ECO:0000250" key="2">
    <source>
        <dbReference type="UniProtKB" id="P00406"/>
    </source>
</evidence>
<evidence type="ECO:0000250" key="3">
    <source>
        <dbReference type="UniProtKB" id="P00410"/>
    </source>
</evidence>
<evidence type="ECO:0000250" key="4">
    <source>
        <dbReference type="UniProtKB" id="P68530"/>
    </source>
</evidence>
<evidence type="ECO:0000305" key="5"/>
<reference key="1">
    <citation type="journal article" date="1997" name="Proc. Natl. Acad. Sci. U.S.A.">
        <title>The complete mitochondrial genome of the wallaroo (Macropus robustus) and the phylogenetic relationship among Monotremata, Marsupialia, and Eutheria.</title>
        <authorList>
            <person name="Janke A."/>
            <person name="Xu X."/>
            <person name="Arnason U."/>
        </authorList>
    </citation>
    <scope>NUCLEOTIDE SEQUENCE [GENOMIC DNA]</scope>
</reference>
<comment type="function">
    <text evidence="3">Component of the cytochrome c oxidase, the last enzyme in the mitochondrial electron transport chain which drives oxidative phosphorylation. The respiratory chain contains 3 multisubunit complexes succinate dehydrogenase (complex II, CII), ubiquinol-cytochrome c oxidoreductase (cytochrome b-c1 complex, complex III, CIII) and cytochrome c oxidase (complex IV, CIV), that cooperate to transfer electrons derived from NADH and succinate to molecular oxygen, creating an electrochemical gradient over the inner membrane that drives transmembrane transport and the ATP synthase. Cytochrome c oxidase is the component of the respiratory chain that catalyzes the reduction of oxygen to water. Electrons originating from reduced cytochrome c in the intermembrane space (IMS) are transferred via the dinuclear copper A center (CU(A)) of subunit 2 and heme A of subunit 1 to the active site in subunit 1, a binuclear center (BNC) formed by heme A3 and copper B (CU(B)). The BNC reduces molecular oxygen to 2 water molecules using 4 electrons from cytochrome c in the IMS and 4 protons from the mitochondrial matrix.</text>
</comment>
<comment type="catalytic activity">
    <reaction evidence="3">
        <text>4 Fe(II)-[cytochrome c] + O2 + 8 H(+)(in) = 4 Fe(III)-[cytochrome c] + 2 H2O + 4 H(+)(out)</text>
        <dbReference type="Rhea" id="RHEA:11436"/>
        <dbReference type="Rhea" id="RHEA-COMP:10350"/>
        <dbReference type="Rhea" id="RHEA-COMP:14399"/>
        <dbReference type="ChEBI" id="CHEBI:15377"/>
        <dbReference type="ChEBI" id="CHEBI:15378"/>
        <dbReference type="ChEBI" id="CHEBI:15379"/>
        <dbReference type="ChEBI" id="CHEBI:29033"/>
        <dbReference type="ChEBI" id="CHEBI:29034"/>
        <dbReference type="EC" id="7.1.1.9"/>
    </reaction>
    <physiologicalReaction direction="left-to-right" evidence="3">
        <dbReference type="Rhea" id="RHEA:11437"/>
    </physiologicalReaction>
</comment>
<comment type="cofactor">
    <cofactor evidence="4">
        <name>Cu cation</name>
        <dbReference type="ChEBI" id="CHEBI:23378"/>
    </cofactor>
    <text evidence="4">Binds a dinuclear copper A center per subunit.</text>
</comment>
<comment type="subunit">
    <text evidence="1 4">Component of the cytochrome c oxidase (complex IV, CIV), a multisubunit enzyme composed of 14 subunits. The complex is composed of a catalytic core of 3 subunits MT-CO1, MT-CO2 and MT-CO3, encoded in the mitochondrial DNA, and 11 supernumerary subunits COX4I, COX5A, COX5B, COX6A, COX6B, COX6C, COX7A, COX7B, COX7C, COX8 and NDUFA4, which are encoded in the nuclear genome. The complex exists as a monomer or a dimer and forms supercomplexes (SCs) in the inner mitochondrial membrane with NADH-ubiquinone oxidoreductase (complex I, CI) and ubiquinol-cytochrome c oxidoreductase (cytochrome b-c1 complex, complex III, CIII), resulting in different assemblies (supercomplex SCI(1)III(2)IV(1) and megacomplex MCI(2)III(2)IV(2)) (By similarity). Found in a complex with TMEM177, COA6, COX18, COX20, SCO1 and SCO2. Interacts with TMEM177 in a COX20-dependent manner. Interacts with COX20. Interacts with COX16 (By similarity).</text>
</comment>
<comment type="subcellular location">
    <subcellularLocation>
        <location evidence="4">Mitochondrion inner membrane</location>
        <topology evidence="4">Multi-pass membrane protein</topology>
    </subcellularLocation>
</comment>
<comment type="similarity">
    <text evidence="5">Belongs to the cytochrome c oxidase subunit 2 family.</text>
</comment>
<proteinExistence type="inferred from homology"/>
<accession>P92662</accession>
<organism>
    <name type="scientific">Osphranter robustus</name>
    <name type="common">Wallaroo</name>
    <name type="synonym">Macropus robustus</name>
    <dbReference type="NCBI Taxonomy" id="9319"/>
    <lineage>
        <taxon>Eukaryota</taxon>
        <taxon>Metazoa</taxon>
        <taxon>Chordata</taxon>
        <taxon>Craniata</taxon>
        <taxon>Vertebrata</taxon>
        <taxon>Euteleostomi</taxon>
        <taxon>Mammalia</taxon>
        <taxon>Metatheria</taxon>
        <taxon>Diprotodontia</taxon>
        <taxon>Macropodidae</taxon>
        <taxon>Osphranter</taxon>
    </lineage>
</organism>
<geneLocation type="mitochondrion"/>
<name>COX2_OSPRO</name>
<dbReference type="EC" id="7.1.1.9"/>
<dbReference type="EMBL" id="Y10524">
    <property type="protein sequence ID" value="CAA71539.1"/>
    <property type="molecule type" value="Genomic_DNA"/>
</dbReference>
<dbReference type="PIR" id="T11431">
    <property type="entry name" value="T11431"/>
</dbReference>
<dbReference type="RefSeq" id="NP_007397.1">
    <property type="nucleotide sequence ID" value="NC_001794.1"/>
</dbReference>
<dbReference type="SMR" id="P92662"/>
<dbReference type="GeneID" id="808077"/>
<dbReference type="CTD" id="4513"/>
<dbReference type="GO" id="GO:0005743">
    <property type="term" value="C:mitochondrial inner membrane"/>
    <property type="evidence" value="ECO:0007669"/>
    <property type="project" value="UniProtKB-SubCell"/>
</dbReference>
<dbReference type="GO" id="GO:0045277">
    <property type="term" value="C:respiratory chain complex IV"/>
    <property type="evidence" value="ECO:0000250"/>
    <property type="project" value="UniProtKB"/>
</dbReference>
<dbReference type="GO" id="GO:0005507">
    <property type="term" value="F:copper ion binding"/>
    <property type="evidence" value="ECO:0007669"/>
    <property type="project" value="InterPro"/>
</dbReference>
<dbReference type="GO" id="GO:0004129">
    <property type="term" value="F:cytochrome-c oxidase activity"/>
    <property type="evidence" value="ECO:0007669"/>
    <property type="project" value="UniProtKB-EC"/>
</dbReference>
<dbReference type="GO" id="GO:0042773">
    <property type="term" value="P:ATP synthesis coupled electron transport"/>
    <property type="evidence" value="ECO:0007669"/>
    <property type="project" value="TreeGrafter"/>
</dbReference>
<dbReference type="CDD" id="cd13912">
    <property type="entry name" value="CcO_II_C"/>
    <property type="match status" value="1"/>
</dbReference>
<dbReference type="FunFam" id="1.10.287.90:FF:000001">
    <property type="entry name" value="Cytochrome c oxidase subunit 2"/>
    <property type="match status" value="1"/>
</dbReference>
<dbReference type="FunFam" id="2.60.40.420:FF:000001">
    <property type="entry name" value="Cytochrome c oxidase subunit 2"/>
    <property type="match status" value="1"/>
</dbReference>
<dbReference type="Gene3D" id="1.10.287.90">
    <property type="match status" value="1"/>
</dbReference>
<dbReference type="Gene3D" id="2.60.40.420">
    <property type="entry name" value="Cupredoxins - blue copper proteins"/>
    <property type="match status" value="1"/>
</dbReference>
<dbReference type="InterPro" id="IPR045187">
    <property type="entry name" value="CcO_II"/>
</dbReference>
<dbReference type="InterPro" id="IPR002429">
    <property type="entry name" value="CcO_II-like_C"/>
</dbReference>
<dbReference type="InterPro" id="IPR034210">
    <property type="entry name" value="CcO_II_C"/>
</dbReference>
<dbReference type="InterPro" id="IPR001505">
    <property type="entry name" value="Copper_CuA"/>
</dbReference>
<dbReference type="InterPro" id="IPR008972">
    <property type="entry name" value="Cupredoxin"/>
</dbReference>
<dbReference type="InterPro" id="IPR014222">
    <property type="entry name" value="Cyt_c_oxidase_su2"/>
</dbReference>
<dbReference type="InterPro" id="IPR011759">
    <property type="entry name" value="Cyt_c_oxidase_su2_TM_dom"/>
</dbReference>
<dbReference type="InterPro" id="IPR036257">
    <property type="entry name" value="Cyt_c_oxidase_su2_TM_sf"/>
</dbReference>
<dbReference type="NCBIfam" id="TIGR02866">
    <property type="entry name" value="CoxB"/>
    <property type="match status" value="1"/>
</dbReference>
<dbReference type="PANTHER" id="PTHR22888:SF9">
    <property type="entry name" value="CYTOCHROME C OXIDASE SUBUNIT 2"/>
    <property type="match status" value="1"/>
</dbReference>
<dbReference type="PANTHER" id="PTHR22888">
    <property type="entry name" value="CYTOCHROME C OXIDASE, SUBUNIT II"/>
    <property type="match status" value="1"/>
</dbReference>
<dbReference type="Pfam" id="PF00116">
    <property type="entry name" value="COX2"/>
    <property type="match status" value="1"/>
</dbReference>
<dbReference type="Pfam" id="PF02790">
    <property type="entry name" value="COX2_TM"/>
    <property type="match status" value="1"/>
</dbReference>
<dbReference type="PRINTS" id="PR01166">
    <property type="entry name" value="CYCOXIDASEII"/>
</dbReference>
<dbReference type="SUPFAM" id="SSF49503">
    <property type="entry name" value="Cupredoxins"/>
    <property type="match status" value="1"/>
</dbReference>
<dbReference type="SUPFAM" id="SSF81464">
    <property type="entry name" value="Cytochrome c oxidase subunit II-like, transmembrane region"/>
    <property type="match status" value="1"/>
</dbReference>
<dbReference type="PROSITE" id="PS00078">
    <property type="entry name" value="COX2"/>
    <property type="match status" value="1"/>
</dbReference>
<dbReference type="PROSITE" id="PS50857">
    <property type="entry name" value="COX2_CUA"/>
    <property type="match status" value="1"/>
</dbReference>
<dbReference type="PROSITE" id="PS50999">
    <property type="entry name" value="COX2_TM"/>
    <property type="match status" value="1"/>
</dbReference>
<keyword id="KW-0186">Copper</keyword>
<keyword id="KW-0249">Electron transport</keyword>
<keyword id="KW-0460">Magnesium</keyword>
<keyword id="KW-0472">Membrane</keyword>
<keyword id="KW-0479">Metal-binding</keyword>
<keyword id="KW-0496">Mitochondrion</keyword>
<keyword id="KW-0999">Mitochondrion inner membrane</keyword>
<keyword id="KW-0597">Phosphoprotein</keyword>
<keyword id="KW-0679">Respiratory chain</keyword>
<keyword id="KW-1278">Translocase</keyword>
<keyword id="KW-0812">Transmembrane</keyword>
<keyword id="KW-1133">Transmembrane helix</keyword>
<keyword id="KW-0813">Transport</keyword>
<protein>
    <recommendedName>
        <fullName>Cytochrome c oxidase subunit 2</fullName>
        <ecNumber>7.1.1.9</ecNumber>
    </recommendedName>
    <alternativeName>
        <fullName>Cytochrome c oxidase polypeptide II</fullName>
    </alternativeName>
</protein>
<sequence length="227" mass="26179">MPYPMQLGFQDATSPIMEELTYFHDHTLMIVFLISSLVLYIIILMLTTKLTHTSTMDAQEVETIWTILPAVILVLIALPSLRILYMMDEIYNPYLTIKAMGHQWYWSYEYTDYEDLTFDSYMIPTQELTPGQLRLLEVDNRVVLPMELPIRVLISSEDVIHAWTVPSLGLKADAIPGRLNQATLTSTRPGVYYGQCSEICGSNHSFMPIVLEMTTLKYFEKWSSMMQ</sequence>
<feature type="chain" id="PRO_0000183628" description="Cytochrome c oxidase subunit 2">
    <location>
        <begin position="1"/>
        <end position="227"/>
    </location>
</feature>
<feature type="topological domain" description="Mitochondrial intermembrane" evidence="4">
    <location>
        <begin position="1"/>
        <end position="14"/>
    </location>
</feature>
<feature type="transmembrane region" description="Helical; Name=I" evidence="4">
    <location>
        <begin position="15"/>
        <end position="45"/>
    </location>
</feature>
<feature type="topological domain" description="Mitochondrial matrix" evidence="4">
    <location>
        <begin position="46"/>
        <end position="59"/>
    </location>
</feature>
<feature type="transmembrane region" description="Helical; Name=II" evidence="4">
    <location>
        <begin position="60"/>
        <end position="87"/>
    </location>
</feature>
<feature type="topological domain" description="Mitochondrial intermembrane" evidence="4">
    <location>
        <begin position="88"/>
        <end position="227"/>
    </location>
</feature>
<feature type="binding site" evidence="4">
    <location>
        <position position="161"/>
    </location>
    <ligand>
        <name>Cu cation</name>
        <dbReference type="ChEBI" id="CHEBI:23378"/>
        <label>A1</label>
    </ligand>
</feature>
<feature type="binding site" evidence="4">
    <location>
        <position position="196"/>
    </location>
    <ligand>
        <name>Cu cation</name>
        <dbReference type="ChEBI" id="CHEBI:23378"/>
        <label>A1</label>
    </ligand>
</feature>
<feature type="binding site" evidence="4">
    <location>
        <position position="196"/>
    </location>
    <ligand>
        <name>Cu cation</name>
        <dbReference type="ChEBI" id="CHEBI:23378"/>
        <label>A2</label>
    </ligand>
</feature>
<feature type="binding site" evidence="4">
    <location>
        <position position="198"/>
    </location>
    <ligand>
        <name>Cu cation</name>
        <dbReference type="ChEBI" id="CHEBI:23378"/>
        <label>A2</label>
    </ligand>
</feature>
<feature type="binding site" evidence="4">
    <location>
        <position position="198"/>
    </location>
    <ligand>
        <name>Mg(2+)</name>
        <dbReference type="ChEBI" id="CHEBI:18420"/>
        <note>ligand shared with MT-CO1</note>
    </ligand>
</feature>
<feature type="binding site" evidence="4">
    <location>
        <position position="200"/>
    </location>
    <ligand>
        <name>Cu cation</name>
        <dbReference type="ChEBI" id="CHEBI:23378"/>
        <label>A1</label>
    </ligand>
</feature>
<feature type="binding site" evidence="4">
    <location>
        <position position="200"/>
    </location>
    <ligand>
        <name>Cu cation</name>
        <dbReference type="ChEBI" id="CHEBI:23378"/>
        <label>A2</label>
    </ligand>
</feature>
<feature type="binding site" evidence="4">
    <location>
        <position position="204"/>
    </location>
    <ligand>
        <name>Cu cation</name>
        <dbReference type="ChEBI" id="CHEBI:23378"/>
        <label>A2</label>
    </ligand>
</feature>
<feature type="binding site" evidence="4">
    <location>
        <position position="207"/>
    </location>
    <ligand>
        <name>Cu cation</name>
        <dbReference type="ChEBI" id="CHEBI:23378"/>
        <label>A1</label>
    </ligand>
</feature>
<feature type="modified residue" description="Phosphotyrosine" evidence="2">
    <location>
        <position position="218"/>
    </location>
</feature>
<gene>
    <name type="primary">MT-CO2</name>
    <name type="synonym">COII</name>
    <name type="synonym">COX2</name>
    <name type="synonym">COXII</name>
    <name type="synonym">MTCO2</name>
</gene>